<keyword id="KW-0131">Cell cycle</keyword>
<keyword id="KW-0132">Cell division</keyword>
<keyword id="KW-1003">Cell membrane</keyword>
<keyword id="KW-0133">Cell shape</keyword>
<keyword id="KW-0961">Cell wall biogenesis/degradation</keyword>
<keyword id="KW-0328">Glycosyltransferase</keyword>
<keyword id="KW-0472">Membrane</keyword>
<keyword id="KW-0573">Peptidoglycan synthesis</keyword>
<keyword id="KW-1185">Reference proteome</keyword>
<keyword id="KW-0808">Transferase</keyword>
<dbReference type="EC" id="2.4.1.227" evidence="1"/>
<dbReference type="EMBL" id="CP000924">
    <property type="protein sequence ID" value="ABY94470.1"/>
    <property type="molecule type" value="Genomic_DNA"/>
</dbReference>
<dbReference type="RefSeq" id="WP_009052546.1">
    <property type="nucleotide sequence ID" value="NC_010321.1"/>
</dbReference>
<dbReference type="SMR" id="B0K8K7"/>
<dbReference type="STRING" id="340099.Teth39_0813"/>
<dbReference type="CAZy" id="GT28">
    <property type="family name" value="Glycosyltransferase Family 28"/>
</dbReference>
<dbReference type="KEGG" id="tpd:Teth39_0813"/>
<dbReference type="eggNOG" id="COG0707">
    <property type="taxonomic scope" value="Bacteria"/>
</dbReference>
<dbReference type="HOGENOM" id="CLU_037404_0_1_9"/>
<dbReference type="UniPathway" id="UPA00219"/>
<dbReference type="Proteomes" id="UP000002156">
    <property type="component" value="Chromosome"/>
</dbReference>
<dbReference type="GO" id="GO:0005886">
    <property type="term" value="C:plasma membrane"/>
    <property type="evidence" value="ECO:0007669"/>
    <property type="project" value="UniProtKB-SubCell"/>
</dbReference>
<dbReference type="GO" id="GO:0051991">
    <property type="term" value="F:UDP-N-acetyl-D-glucosamine:N-acetylmuramoyl-L-alanyl-D-glutamyl-meso-2,6-diaminopimelyl-D-alanyl-D-alanine-diphosphoundecaprenol 4-beta-N-acetylglucosaminlytransferase activity"/>
    <property type="evidence" value="ECO:0007669"/>
    <property type="project" value="RHEA"/>
</dbReference>
<dbReference type="GO" id="GO:0050511">
    <property type="term" value="F:undecaprenyldiphospho-muramoylpentapeptide beta-N-acetylglucosaminyltransferase activity"/>
    <property type="evidence" value="ECO:0007669"/>
    <property type="project" value="UniProtKB-UniRule"/>
</dbReference>
<dbReference type="GO" id="GO:0005975">
    <property type="term" value="P:carbohydrate metabolic process"/>
    <property type="evidence" value="ECO:0007669"/>
    <property type="project" value="InterPro"/>
</dbReference>
<dbReference type="GO" id="GO:0051301">
    <property type="term" value="P:cell division"/>
    <property type="evidence" value="ECO:0007669"/>
    <property type="project" value="UniProtKB-KW"/>
</dbReference>
<dbReference type="GO" id="GO:0071555">
    <property type="term" value="P:cell wall organization"/>
    <property type="evidence" value="ECO:0007669"/>
    <property type="project" value="UniProtKB-KW"/>
</dbReference>
<dbReference type="GO" id="GO:0030259">
    <property type="term" value="P:lipid glycosylation"/>
    <property type="evidence" value="ECO:0007669"/>
    <property type="project" value="UniProtKB-UniRule"/>
</dbReference>
<dbReference type="GO" id="GO:0009252">
    <property type="term" value="P:peptidoglycan biosynthetic process"/>
    <property type="evidence" value="ECO:0007669"/>
    <property type="project" value="UniProtKB-UniRule"/>
</dbReference>
<dbReference type="GO" id="GO:0008360">
    <property type="term" value="P:regulation of cell shape"/>
    <property type="evidence" value="ECO:0007669"/>
    <property type="project" value="UniProtKB-KW"/>
</dbReference>
<dbReference type="CDD" id="cd03785">
    <property type="entry name" value="GT28_MurG"/>
    <property type="match status" value="1"/>
</dbReference>
<dbReference type="Gene3D" id="3.40.50.2000">
    <property type="entry name" value="Glycogen Phosphorylase B"/>
    <property type="match status" value="2"/>
</dbReference>
<dbReference type="HAMAP" id="MF_00033">
    <property type="entry name" value="MurG"/>
    <property type="match status" value="1"/>
</dbReference>
<dbReference type="InterPro" id="IPR006009">
    <property type="entry name" value="GlcNAc_MurG"/>
</dbReference>
<dbReference type="InterPro" id="IPR007235">
    <property type="entry name" value="Glyco_trans_28_C"/>
</dbReference>
<dbReference type="InterPro" id="IPR004276">
    <property type="entry name" value="GlycoTrans_28_N"/>
</dbReference>
<dbReference type="NCBIfam" id="TIGR01133">
    <property type="entry name" value="murG"/>
    <property type="match status" value="1"/>
</dbReference>
<dbReference type="PANTHER" id="PTHR21015:SF22">
    <property type="entry name" value="GLYCOSYLTRANSFERASE"/>
    <property type="match status" value="1"/>
</dbReference>
<dbReference type="PANTHER" id="PTHR21015">
    <property type="entry name" value="UDP-N-ACETYLGLUCOSAMINE--N-ACETYLMURAMYL-(PENTAPEPTIDE) PYROPHOSPHORYL-UNDECAPRENOL N-ACETYLGLUCOSAMINE TRANSFERASE 1"/>
    <property type="match status" value="1"/>
</dbReference>
<dbReference type="Pfam" id="PF04101">
    <property type="entry name" value="Glyco_tran_28_C"/>
    <property type="match status" value="1"/>
</dbReference>
<dbReference type="Pfam" id="PF03033">
    <property type="entry name" value="Glyco_transf_28"/>
    <property type="match status" value="1"/>
</dbReference>
<dbReference type="SUPFAM" id="SSF53756">
    <property type="entry name" value="UDP-Glycosyltransferase/glycogen phosphorylase"/>
    <property type="match status" value="1"/>
</dbReference>
<proteinExistence type="inferred from homology"/>
<protein>
    <recommendedName>
        <fullName evidence="1">UDP-N-acetylglucosamine--N-acetylmuramyl-(pentapeptide) pyrophosphoryl-undecaprenol N-acetylglucosamine transferase</fullName>
        <ecNumber evidence="1">2.4.1.227</ecNumber>
    </recommendedName>
    <alternativeName>
        <fullName evidence="1">Undecaprenyl-PP-MurNAc-pentapeptide-UDPGlcNAc GlcNAc transferase</fullName>
    </alternativeName>
</protein>
<name>MURG_THEP3</name>
<accession>B0K8K7</accession>
<comment type="function">
    <text evidence="1">Cell wall formation. Catalyzes the transfer of a GlcNAc subunit on undecaprenyl-pyrophosphoryl-MurNAc-pentapeptide (lipid intermediate I) to form undecaprenyl-pyrophosphoryl-MurNAc-(pentapeptide)GlcNAc (lipid intermediate II).</text>
</comment>
<comment type="catalytic activity">
    <reaction evidence="1">
        <text>di-trans,octa-cis-undecaprenyl diphospho-N-acetyl-alpha-D-muramoyl-L-alanyl-D-glutamyl-meso-2,6-diaminopimeloyl-D-alanyl-D-alanine + UDP-N-acetyl-alpha-D-glucosamine = di-trans,octa-cis-undecaprenyl diphospho-[N-acetyl-alpha-D-glucosaminyl-(1-&gt;4)]-N-acetyl-alpha-D-muramoyl-L-alanyl-D-glutamyl-meso-2,6-diaminopimeloyl-D-alanyl-D-alanine + UDP + H(+)</text>
        <dbReference type="Rhea" id="RHEA:31227"/>
        <dbReference type="ChEBI" id="CHEBI:15378"/>
        <dbReference type="ChEBI" id="CHEBI:57705"/>
        <dbReference type="ChEBI" id="CHEBI:58223"/>
        <dbReference type="ChEBI" id="CHEBI:61387"/>
        <dbReference type="ChEBI" id="CHEBI:61388"/>
        <dbReference type="EC" id="2.4.1.227"/>
    </reaction>
</comment>
<comment type="pathway">
    <text evidence="1">Cell wall biogenesis; peptidoglycan biosynthesis.</text>
</comment>
<comment type="subcellular location">
    <subcellularLocation>
        <location evidence="1">Cell membrane</location>
        <topology evidence="1">Peripheral membrane protein</topology>
        <orientation evidence="1">Cytoplasmic side</orientation>
    </subcellularLocation>
</comment>
<comment type="similarity">
    <text evidence="1">Belongs to the glycosyltransferase 28 family. MurG subfamily.</text>
</comment>
<gene>
    <name evidence="1" type="primary">murG</name>
    <name type="ordered locus">Teth39_0813</name>
</gene>
<sequence length="364" mass="40357">MKYLFAGGGTGGHIYPAIAIAKEILKNEKNAQILFVGTKKGLENELVPREGFELKTITVQGFKRKLSLDTLKTIYKAMVGLKEANNILNEFKPDVVIGTGGYVCGPVLMMAALKGIPTLIHEQNAFPGLTNKVLSRFVKVVAVSFEESVKYFKNKEKVVVTGNPIRRELLKVTKEEGLKNLGFYSDKPLIVSVGGSRGAEKINFTMVEFLKQKDKNLQVLIITGANQYEKVLEKVKTETIDIDETVKIIPYCHNMQDVYAAADIIICRAGAITLAEITAKGVASILIPSPYVANNHQEYNARVLEKAGASYVILEKDLTAEKLYKKIKYLLDNPQVLSKMRDNAQKISKIDAAEKIYKLIKSIT</sequence>
<organism>
    <name type="scientific">Thermoanaerobacter pseudethanolicus (strain ATCC 33223 / 39E)</name>
    <name type="common">Clostridium thermohydrosulfuricum</name>
    <dbReference type="NCBI Taxonomy" id="340099"/>
    <lineage>
        <taxon>Bacteria</taxon>
        <taxon>Bacillati</taxon>
        <taxon>Bacillota</taxon>
        <taxon>Clostridia</taxon>
        <taxon>Thermoanaerobacterales</taxon>
        <taxon>Thermoanaerobacteraceae</taxon>
        <taxon>Thermoanaerobacter</taxon>
    </lineage>
</organism>
<feature type="chain" id="PRO_1000090480" description="UDP-N-acetylglucosamine--N-acetylmuramyl-(pentapeptide) pyrophosphoryl-undecaprenol N-acetylglucosamine transferase">
    <location>
        <begin position="1"/>
        <end position="364"/>
    </location>
</feature>
<feature type="binding site" evidence="1">
    <location>
        <begin position="10"/>
        <end position="12"/>
    </location>
    <ligand>
        <name>UDP-N-acetyl-alpha-D-glucosamine</name>
        <dbReference type="ChEBI" id="CHEBI:57705"/>
    </ligand>
</feature>
<feature type="binding site" evidence="1">
    <location>
        <position position="124"/>
    </location>
    <ligand>
        <name>UDP-N-acetyl-alpha-D-glucosamine</name>
        <dbReference type="ChEBI" id="CHEBI:57705"/>
    </ligand>
</feature>
<feature type="binding site" evidence="1">
    <location>
        <position position="166"/>
    </location>
    <ligand>
        <name>UDP-N-acetyl-alpha-D-glucosamine</name>
        <dbReference type="ChEBI" id="CHEBI:57705"/>
    </ligand>
</feature>
<feature type="binding site" evidence="1">
    <location>
        <position position="196"/>
    </location>
    <ligand>
        <name>UDP-N-acetyl-alpha-D-glucosamine</name>
        <dbReference type="ChEBI" id="CHEBI:57705"/>
    </ligand>
</feature>
<feature type="binding site" evidence="1">
    <location>
        <position position="297"/>
    </location>
    <ligand>
        <name>UDP-N-acetyl-alpha-D-glucosamine</name>
        <dbReference type="ChEBI" id="CHEBI:57705"/>
    </ligand>
</feature>
<reference key="1">
    <citation type="submission" date="2008-01" db="EMBL/GenBank/DDBJ databases">
        <title>Complete sequence of Thermoanaerobacter pseudethanolicus 39E.</title>
        <authorList>
            <person name="Copeland A."/>
            <person name="Lucas S."/>
            <person name="Lapidus A."/>
            <person name="Barry K."/>
            <person name="Glavina del Rio T."/>
            <person name="Dalin E."/>
            <person name="Tice H."/>
            <person name="Pitluck S."/>
            <person name="Bruce D."/>
            <person name="Goodwin L."/>
            <person name="Saunders E."/>
            <person name="Brettin T."/>
            <person name="Detter J.C."/>
            <person name="Han C."/>
            <person name="Schmutz J."/>
            <person name="Larimer F."/>
            <person name="Land M."/>
            <person name="Hauser L."/>
            <person name="Kyrpides N."/>
            <person name="Lykidis A."/>
            <person name="Hemme C."/>
            <person name="Fields M.W."/>
            <person name="He Z."/>
            <person name="Zhou J."/>
            <person name="Richardson P."/>
        </authorList>
    </citation>
    <scope>NUCLEOTIDE SEQUENCE [LARGE SCALE GENOMIC DNA]</scope>
    <source>
        <strain>ATCC 33223 / DSM 2355 / 39E</strain>
    </source>
</reference>
<evidence type="ECO:0000255" key="1">
    <source>
        <dbReference type="HAMAP-Rule" id="MF_00033"/>
    </source>
</evidence>